<reference evidence="11" key="1">
    <citation type="journal article" date="2000" name="Science">
        <title>The genome sequence of Drosophila melanogaster.</title>
        <authorList>
            <person name="Adams M.D."/>
            <person name="Celniker S.E."/>
            <person name="Holt R.A."/>
            <person name="Evans C.A."/>
            <person name="Gocayne J.D."/>
            <person name="Amanatides P.G."/>
            <person name="Scherer S.E."/>
            <person name="Li P.W."/>
            <person name="Hoskins R.A."/>
            <person name="Galle R.F."/>
            <person name="George R.A."/>
            <person name="Lewis S.E."/>
            <person name="Richards S."/>
            <person name="Ashburner M."/>
            <person name="Henderson S.N."/>
            <person name="Sutton G.G."/>
            <person name="Wortman J.R."/>
            <person name="Yandell M.D."/>
            <person name="Zhang Q."/>
            <person name="Chen L.X."/>
            <person name="Brandon R.C."/>
            <person name="Rogers Y.-H.C."/>
            <person name="Blazej R.G."/>
            <person name="Champe M."/>
            <person name="Pfeiffer B.D."/>
            <person name="Wan K.H."/>
            <person name="Doyle C."/>
            <person name="Baxter E.G."/>
            <person name="Helt G."/>
            <person name="Nelson C.R."/>
            <person name="Miklos G.L.G."/>
            <person name="Abril J.F."/>
            <person name="Agbayani A."/>
            <person name="An H.-J."/>
            <person name="Andrews-Pfannkoch C."/>
            <person name="Baldwin D."/>
            <person name="Ballew R.M."/>
            <person name="Basu A."/>
            <person name="Baxendale J."/>
            <person name="Bayraktaroglu L."/>
            <person name="Beasley E.M."/>
            <person name="Beeson K.Y."/>
            <person name="Benos P.V."/>
            <person name="Berman B.P."/>
            <person name="Bhandari D."/>
            <person name="Bolshakov S."/>
            <person name="Borkova D."/>
            <person name="Botchan M.R."/>
            <person name="Bouck J."/>
            <person name="Brokstein P."/>
            <person name="Brottier P."/>
            <person name="Burtis K.C."/>
            <person name="Busam D.A."/>
            <person name="Butler H."/>
            <person name="Cadieu E."/>
            <person name="Center A."/>
            <person name="Chandra I."/>
            <person name="Cherry J.M."/>
            <person name="Cawley S."/>
            <person name="Dahlke C."/>
            <person name="Davenport L.B."/>
            <person name="Davies P."/>
            <person name="de Pablos B."/>
            <person name="Delcher A."/>
            <person name="Deng Z."/>
            <person name="Mays A.D."/>
            <person name="Dew I."/>
            <person name="Dietz S.M."/>
            <person name="Dodson K."/>
            <person name="Doup L.E."/>
            <person name="Downes M."/>
            <person name="Dugan-Rocha S."/>
            <person name="Dunkov B.C."/>
            <person name="Dunn P."/>
            <person name="Durbin K.J."/>
            <person name="Evangelista C.C."/>
            <person name="Ferraz C."/>
            <person name="Ferriera S."/>
            <person name="Fleischmann W."/>
            <person name="Fosler C."/>
            <person name="Gabrielian A.E."/>
            <person name="Garg N.S."/>
            <person name="Gelbart W.M."/>
            <person name="Glasser K."/>
            <person name="Glodek A."/>
            <person name="Gong F."/>
            <person name="Gorrell J.H."/>
            <person name="Gu Z."/>
            <person name="Guan P."/>
            <person name="Harris M."/>
            <person name="Harris N.L."/>
            <person name="Harvey D.A."/>
            <person name="Heiman T.J."/>
            <person name="Hernandez J.R."/>
            <person name="Houck J."/>
            <person name="Hostin D."/>
            <person name="Houston K.A."/>
            <person name="Howland T.J."/>
            <person name="Wei M.-H."/>
            <person name="Ibegwam C."/>
            <person name="Jalali M."/>
            <person name="Kalush F."/>
            <person name="Karpen G.H."/>
            <person name="Ke Z."/>
            <person name="Kennison J.A."/>
            <person name="Ketchum K.A."/>
            <person name="Kimmel B.E."/>
            <person name="Kodira C.D."/>
            <person name="Kraft C.L."/>
            <person name="Kravitz S."/>
            <person name="Kulp D."/>
            <person name="Lai Z."/>
            <person name="Lasko P."/>
            <person name="Lei Y."/>
            <person name="Levitsky A.A."/>
            <person name="Li J.H."/>
            <person name="Li Z."/>
            <person name="Liang Y."/>
            <person name="Lin X."/>
            <person name="Liu X."/>
            <person name="Mattei B."/>
            <person name="McIntosh T.C."/>
            <person name="McLeod M.P."/>
            <person name="McPherson D."/>
            <person name="Merkulov G."/>
            <person name="Milshina N.V."/>
            <person name="Mobarry C."/>
            <person name="Morris J."/>
            <person name="Moshrefi A."/>
            <person name="Mount S.M."/>
            <person name="Moy M."/>
            <person name="Murphy B."/>
            <person name="Murphy L."/>
            <person name="Muzny D.M."/>
            <person name="Nelson D.L."/>
            <person name="Nelson D.R."/>
            <person name="Nelson K.A."/>
            <person name="Nixon K."/>
            <person name="Nusskern D.R."/>
            <person name="Pacleb J.M."/>
            <person name="Palazzolo M."/>
            <person name="Pittman G.S."/>
            <person name="Pan S."/>
            <person name="Pollard J."/>
            <person name="Puri V."/>
            <person name="Reese M.G."/>
            <person name="Reinert K."/>
            <person name="Remington K."/>
            <person name="Saunders R.D.C."/>
            <person name="Scheeler F."/>
            <person name="Shen H."/>
            <person name="Shue B.C."/>
            <person name="Siden-Kiamos I."/>
            <person name="Simpson M."/>
            <person name="Skupski M.P."/>
            <person name="Smith T.J."/>
            <person name="Spier E."/>
            <person name="Spradling A.C."/>
            <person name="Stapleton M."/>
            <person name="Strong R."/>
            <person name="Sun E."/>
            <person name="Svirskas R."/>
            <person name="Tector C."/>
            <person name="Turner R."/>
            <person name="Venter E."/>
            <person name="Wang A.H."/>
            <person name="Wang X."/>
            <person name="Wang Z.-Y."/>
            <person name="Wassarman D.A."/>
            <person name="Weinstock G.M."/>
            <person name="Weissenbach J."/>
            <person name="Williams S.M."/>
            <person name="Woodage T."/>
            <person name="Worley K.C."/>
            <person name="Wu D."/>
            <person name="Yang S."/>
            <person name="Yao Q.A."/>
            <person name="Ye J."/>
            <person name="Yeh R.-F."/>
            <person name="Zaveri J.S."/>
            <person name="Zhan M."/>
            <person name="Zhang G."/>
            <person name="Zhao Q."/>
            <person name="Zheng L."/>
            <person name="Zheng X.H."/>
            <person name="Zhong F.N."/>
            <person name="Zhong W."/>
            <person name="Zhou X."/>
            <person name="Zhu S.C."/>
            <person name="Zhu X."/>
            <person name="Smith H.O."/>
            <person name="Gibbs R.A."/>
            <person name="Myers E.W."/>
            <person name="Rubin G.M."/>
            <person name="Venter J.C."/>
        </authorList>
    </citation>
    <scope>NUCLEOTIDE SEQUENCE [LARGE SCALE GENOMIC DNA]</scope>
    <source>
        <strain evidence="11">Berkeley</strain>
    </source>
</reference>
<reference evidence="11" key="2">
    <citation type="journal article" date="2002" name="Genome Biol.">
        <title>Annotation of the Drosophila melanogaster euchromatic genome: a systematic review.</title>
        <authorList>
            <person name="Misra S."/>
            <person name="Crosby M.A."/>
            <person name="Mungall C.J."/>
            <person name="Matthews B.B."/>
            <person name="Campbell K.S."/>
            <person name="Hradecky P."/>
            <person name="Huang Y."/>
            <person name="Kaminker J.S."/>
            <person name="Millburn G.H."/>
            <person name="Prochnik S.E."/>
            <person name="Smith C.D."/>
            <person name="Tupy J.L."/>
            <person name="Whitfield E.J."/>
            <person name="Bayraktaroglu L."/>
            <person name="Berman B.P."/>
            <person name="Bettencourt B.R."/>
            <person name="Celniker S.E."/>
            <person name="de Grey A.D.N.J."/>
            <person name="Drysdale R.A."/>
            <person name="Harris N.L."/>
            <person name="Richter J."/>
            <person name="Russo S."/>
            <person name="Schroeder A.J."/>
            <person name="Shu S.Q."/>
            <person name="Stapleton M."/>
            <person name="Yamada C."/>
            <person name="Ashburner M."/>
            <person name="Gelbart W.M."/>
            <person name="Rubin G.M."/>
            <person name="Lewis S.E."/>
        </authorList>
    </citation>
    <scope>GENOME REANNOTATION</scope>
    <source>
        <strain evidence="11">Berkeley</strain>
    </source>
</reference>
<reference evidence="8 9" key="3">
    <citation type="submission" date="2016-07" db="EMBL/GenBank/DDBJ databases">
        <authorList>
            <person name="Booth B."/>
            <person name="Calderwood M."/>
            <person name="Carlson J."/>
            <person name="Celniker S."/>
            <person name="Frise E."/>
            <person name="Hao T."/>
            <person name="Hu Y."/>
            <person name="Hill D."/>
            <person name="Yu C."/>
            <person name="Mohr S."/>
            <person name="Park S."/>
            <person name="Perrimon N."/>
            <person name="Spirohn K."/>
            <person name="Vidal M."/>
            <person name="Wan K."/>
        </authorList>
    </citation>
    <scope>NUCLEOTIDE SEQUENCE [LARGE SCALE MRNA]</scope>
</reference>
<reference evidence="7" key="4">
    <citation type="journal article" date="2015" name="PLoS Pathog.">
        <title>An effector Peptide family required for Drosophila toll-mediated immunity.</title>
        <authorList>
            <person name="Clemmons A.W."/>
            <person name="Lindsay S.A."/>
            <person name="Wasserman S.A."/>
        </authorList>
    </citation>
    <scope>FUNCTION</scope>
</reference>
<reference evidence="7" key="5">
    <citation type="journal article" date="2018" name="J. Innate Immun.">
        <title>Short-Form Bomanins Mediate Humoral Immunity in Drosophila.</title>
        <authorList>
            <person name="Lindsay S.A."/>
            <person name="Lin S.J.H."/>
            <person name="Wasserman S.A."/>
        </authorList>
    </citation>
    <scope>FUNCTION</scope>
</reference>
<name>BOM06_DROME</name>
<proteinExistence type="inferred from homology"/>
<dbReference type="EMBL" id="AE013599">
    <property type="protein sequence ID" value="AAN16134.1"/>
    <property type="molecule type" value="Genomic_DNA"/>
</dbReference>
<dbReference type="EMBL" id="BT126194">
    <property type="protein sequence ID" value="AEA77308.1"/>
    <property type="status" value="ALT_INIT"/>
    <property type="molecule type" value="mRNA"/>
</dbReference>
<dbReference type="EMBL" id="KX531868">
    <property type="protein sequence ID" value="ANY27678.1"/>
    <property type="molecule type" value="mRNA"/>
</dbReference>
<dbReference type="RefSeq" id="NP_788402.1">
    <property type="nucleotide sequence ID" value="NM_176222.2"/>
</dbReference>
<dbReference type="FunCoup" id="A1ZB64">
    <property type="interactions" value="5"/>
</dbReference>
<dbReference type="IntAct" id="A1ZB64">
    <property type="interactions" value="2"/>
</dbReference>
<dbReference type="STRING" id="7227.FBpp0085906"/>
<dbReference type="PaxDb" id="7227-FBpp0085906"/>
<dbReference type="DNASU" id="50206"/>
<dbReference type="EnsemblMetazoa" id="FBtr0086727">
    <property type="protein sequence ID" value="FBpp0085906"/>
    <property type="gene ID" value="FBgn0040733"/>
</dbReference>
<dbReference type="GeneID" id="50206"/>
<dbReference type="KEGG" id="dme:Dmel_CG15068"/>
<dbReference type="UCSC" id="CG15068-RA">
    <property type="organism name" value="d. melanogaster"/>
</dbReference>
<dbReference type="AGR" id="FB:FBgn0040733"/>
<dbReference type="CTD" id="50206"/>
<dbReference type="FlyBase" id="FBgn0040733">
    <property type="gene designation" value="BomS6"/>
</dbReference>
<dbReference type="VEuPathDB" id="VectorBase:FBgn0040733"/>
<dbReference type="eggNOG" id="ENOG502T9FY">
    <property type="taxonomic scope" value="Eukaryota"/>
</dbReference>
<dbReference type="HOGENOM" id="CLU_204809_0_0_1"/>
<dbReference type="InParanoid" id="A1ZB64"/>
<dbReference type="PhylomeDB" id="A1ZB64"/>
<dbReference type="BioGRID-ORCS" id="50206">
    <property type="hits" value="0 hits in 1 CRISPR screen"/>
</dbReference>
<dbReference type="GenomeRNAi" id="50206"/>
<dbReference type="PRO" id="PR:A1ZB64"/>
<dbReference type="Proteomes" id="UP000000803">
    <property type="component" value="Chromosome 2R"/>
</dbReference>
<dbReference type="Bgee" id="FBgn0040733">
    <property type="expression patterns" value="Expressed in head capsule and 73 other cell types or tissues"/>
</dbReference>
<dbReference type="GO" id="GO:0005576">
    <property type="term" value="C:extracellular region"/>
    <property type="evidence" value="ECO:0007669"/>
    <property type="project" value="UniProtKB-SubCell"/>
</dbReference>
<dbReference type="GO" id="GO:0045087">
    <property type="term" value="P:innate immune response"/>
    <property type="evidence" value="ECO:0007669"/>
    <property type="project" value="UniProtKB-KW"/>
</dbReference>
<dbReference type="GO" id="GO:0010046">
    <property type="term" value="P:response to mycotoxin"/>
    <property type="evidence" value="ECO:0000315"/>
    <property type="project" value="FlyBase"/>
</dbReference>
<dbReference type="InterPro" id="IPR013172">
    <property type="entry name" value="Bomanin"/>
</dbReference>
<dbReference type="Pfam" id="PF08194">
    <property type="entry name" value="DIM"/>
    <property type="match status" value="1"/>
</dbReference>
<organism evidence="11">
    <name type="scientific">Drosophila melanogaster</name>
    <name type="common">Fruit fly</name>
    <dbReference type="NCBI Taxonomy" id="7227"/>
    <lineage>
        <taxon>Eukaryota</taxon>
        <taxon>Metazoa</taxon>
        <taxon>Ecdysozoa</taxon>
        <taxon>Arthropoda</taxon>
        <taxon>Hexapoda</taxon>
        <taxon>Insecta</taxon>
        <taxon>Pterygota</taxon>
        <taxon>Neoptera</taxon>
        <taxon>Endopterygota</taxon>
        <taxon>Diptera</taxon>
        <taxon>Brachycera</taxon>
        <taxon>Muscomorpha</taxon>
        <taxon>Ephydroidea</taxon>
        <taxon>Drosophilidae</taxon>
        <taxon>Drosophila</taxon>
        <taxon>Sophophora</taxon>
    </lineage>
</organism>
<feature type="signal peptide" evidence="2">
    <location>
        <begin position="1"/>
        <end position="18"/>
    </location>
</feature>
<feature type="propeptide" id="PRO_0000448690" description="Removed by a dipeptidylpeptidase" evidence="1">
    <location>
        <begin position="19"/>
        <end position="23"/>
    </location>
</feature>
<feature type="peptide" id="PRO_0000448691" description="Bomanin Short 6" evidence="1">
    <location>
        <begin position="24"/>
        <end position="40"/>
    </location>
</feature>
<feature type="disulfide bond" evidence="1">
    <location>
        <begin position="32"/>
        <end position="35"/>
    </location>
</feature>
<sequence>MKLLSITFLFGLLALASANPLSPGNVIINGDCKVCNIRGD</sequence>
<protein>
    <recommendedName>
        <fullName evidence="10">Bomanin Short 6</fullName>
    </recommendedName>
    <alternativeName>
        <fullName evidence="5">Bomanin-068</fullName>
    </alternativeName>
</protein>
<comment type="function">
    <text evidence="3 4">Secreted immune-induced peptide induced by Toll signaling. Has a role in resistance to bacterial and fungal infections (PubMed:25915418, PubMed:29920489). The strength of antimicrobial activity appears to correlate with the overall level of expression (PubMed:29920489).</text>
</comment>
<comment type="subcellular location">
    <subcellularLocation>
        <location evidence="1">Secreted</location>
    </subcellularLocation>
</comment>
<comment type="similarity">
    <text evidence="7">Belongs to the bomanin family.</text>
</comment>
<comment type="sequence caution" evidence="7">
    <conflict type="erroneous initiation">
        <sequence resource="EMBL-CDS" id="AEA77308"/>
    </conflict>
    <text>Extended N-terminus.</text>
</comment>
<keyword id="KW-1015">Disulfide bond</keyword>
<keyword id="KW-0391">Immunity</keyword>
<keyword id="KW-0399">Innate immunity</keyword>
<keyword id="KW-1185">Reference proteome</keyword>
<keyword id="KW-0964">Secreted</keyword>
<keyword id="KW-0732">Signal</keyword>
<accession>A1ZB64</accession>
<accession>F2FBA7</accession>
<gene>
    <name evidence="10" type="primary">BomS6</name>
    <name evidence="6" type="synonym">Bom068</name>
    <name evidence="10" type="ORF">CG15068</name>
</gene>
<evidence type="ECO:0000250" key="1">
    <source>
        <dbReference type="UniProtKB" id="P82706"/>
    </source>
</evidence>
<evidence type="ECO:0000255" key="2"/>
<evidence type="ECO:0000269" key="3">
    <source>
    </source>
</evidence>
<evidence type="ECO:0000269" key="4">
    <source>
    </source>
</evidence>
<evidence type="ECO:0000303" key="5">
    <source>
    </source>
</evidence>
<evidence type="ECO:0000303" key="6">
    <source>
    </source>
</evidence>
<evidence type="ECO:0000305" key="7"/>
<evidence type="ECO:0000312" key="8">
    <source>
        <dbReference type="EMBL" id="AEA77308.1"/>
    </source>
</evidence>
<evidence type="ECO:0000312" key="9">
    <source>
        <dbReference type="EMBL" id="ANY27678.1"/>
    </source>
</evidence>
<evidence type="ECO:0000312" key="10">
    <source>
        <dbReference type="FlyBase" id="FBgn0040733"/>
    </source>
</evidence>
<evidence type="ECO:0000312" key="11">
    <source>
        <dbReference type="Proteomes" id="UP000000803"/>
    </source>
</evidence>